<evidence type="ECO:0000255" key="1">
    <source>
        <dbReference type="HAMAP-Rule" id="MF_00300"/>
    </source>
</evidence>
<reference key="1">
    <citation type="journal article" date="2009" name="BMC Genomics">
        <title>Genome evolution driven by host adaptations results in a more virulent and antimicrobial-resistant Streptococcus pneumoniae serotype 14.</title>
        <authorList>
            <person name="Ding F."/>
            <person name="Tang P."/>
            <person name="Hsu M.-H."/>
            <person name="Cui P."/>
            <person name="Hu S."/>
            <person name="Yu J."/>
            <person name="Chiu C.-H."/>
        </authorList>
    </citation>
    <scope>NUCLEOTIDE SEQUENCE [LARGE SCALE GENOMIC DNA]</scope>
    <source>
        <strain>CGSP14</strain>
    </source>
</reference>
<protein>
    <recommendedName>
        <fullName evidence="1">Chorismate synthase</fullName>
        <shortName evidence="1">CS</shortName>
        <ecNumber evidence="1">4.2.3.5</ecNumber>
    </recommendedName>
    <alternativeName>
        <fullName evidence="1">5-enolpyruvylshikimate-3-phosphate phospholyase</fullName>
    </alternativeName>
</protein>
<gene>
    <name evidence="1" type="primary">aroC</name>
    <name type="ordered locus">SPCG_1364</name>
</gene>
<dbReference type="EC" id="4.2.3.5" evidence="1"/>
<dbReference type="EMBL" id="CP001033">
    <property type="protein sequence ID" value="ACB90616.1"/>
    <property type="molecule type" value="Genomic_DNA"/>
</dbReference>
<dbReference type="RefSeq" id="WP_001269866.1">
    <property type="nucleotide sequence ID" value="NC_010582.1"/>
</dbReference>
<dbReference type="SMR" id="B2IQJ2"/>
<dbReference type="KEGG" id="spw:SPCG_1364"/>
<dbReference type="HOGENOM" id="CLU_034547_2_0_9"/>
<dbReference type="UniPathway" id="UPA00053">
    <property type="reaction ID" value="UER00090"/>
</dbReference>
<dbReference type="GO" id="GO:0005829">
    <property type="term" value="C:cytosol"/>
    <property type="evidence" value="ECO:0007669"/>
    <property type="project" value="TreeGrafter"/>
</dbReference>
<dbReference type="GO" id="GO:0004107">
    <property type="term" value="F:chorismate synthase activity"/>
    <property type="evidence" value="ECO:0007669"/>
    <property type="project" value="UniProtKB-UniRule"/>
</dbReference>
<dbReference type="GO" id="GO:0010181">
    <property type="term" value="F:FMN binding"/>
    <property type="evidence" value="ECO:0007669"/>
    <property type="project" value="TreeGrafter"/>
</dbReference>
<dbReference type="GO" id="GO:0008652">
    <property type="term" value="P:amino acid biosynthetic process"/>
    <property type="evidence" value="ECO:0007669"/>
    <property type="project" value="UniProtKB-KW"/>
</dbReference>
<dbReference type="GO" id="GO:0009073">
    <property type="term" value="P:aromatic amino acid family biosynthetic process"/>
    <property type="evidence" value="ECO:0007669"/>
    <property type="project" value="UniProtKB-KW"/>
</dbReference>
<dbReference type="GO" id="GO:0009423">
    <property type="term" value="P:chorismate biosynthetic process"/>
    <property type="evidence" value="ECO:0007669"/>
    <property type="project" value="UniProtKB-UniRule"/>
</dbReference>
<dbReference type="CDD" id="cd07304">
    <property type="entry name" value="Chorismate_synthase"/>
    <property type="match status" value="1"/>
</dbReference>
<dbReference type="FunFam" id="3.60.150.10:FF:000002">
    <property type="entry name" value="Chorismate synthase"/>
    <property type="match status" value="1"/>
</dbReference>
<dbReference type="Gene3D" id="3.60.150.10">
    <property type="entry name" value="Chorismate synthase AroC"/>
    <property type="match status" value="1"/>
</dbReference>
<dbReference type="HAMAP" id="MF_00300">
    <property type="entry name" value="Chorismate_synth"/>
    <property type="match status" value="1"/>
</dbReference>
<dbReference type="InterPro" id="IPR000453">
    <property type="entry name" value="Chorismate_synth"/>
</dbReference>
<dbReference type="InterPro" id="IPR035904">
    <property type="entry name" value="Chorismate_synth_AroC_sf"/>
</dbReference>
<dbReference type="InterPro" id="IPR020541">
    <property type="entry name" value="Chorismate_synthase_CS"/>
</dbReference>
<dbReference type="NCBIfam" id="TIGR00033">
    <property type="entry name" value="aroC"/>
    <property type="match status" value="1"/>
</dbReference>
<dbReference type="NCBIfam" id="NF003793">
    <property type="entry name" value="PRK05382.1"/>
    <property type="match status" value="1"/>
</dbReference>
<dbReference type="PANTHER" id="PTHR21085">
    <property type="entry name" value="CHORISMATE SYNTHASE"/>
    <property type="match status" value="1"/>
</dbReference>
<dbReference type="PANTHER" id="PTHR21085:SF0">
    <property type="entry name" value="CHORISMATE SYNTHASE"/>
    <property type="match status" value="1"/>
</dbReference>
<dbReference type="Pfam" id="PF01264">
    <property type="entry name" value="Chorismate_synt"/>
    <property type="match status" value="1"/>
</dbReference>
<dbReference type="PIRSF" id="PIRSF001456">
    <property type="entry name" value="Chorismate_synth"/>
    <property type="match status" value="1"/>
</dbReference>
<dbReference type="SUPFAM" id="SSF103263">
    <property type="entry name" value="Chorismate synthase, AroC"/>
    <property type="match status" value="1"/>
</dbReference>
<dbReference type="PROSITE" id="PS00787">
    <property type="entry name" value="CHORISMATE_SYNTHASE_1"/>
    <property type="match status" value="1"/>
</dbReference>
<dbReference type="PROSITE" id="PS00788">
    <property type="entry name" value="CHORISMATE_SYNTHASE_2"/>
    <property type="match status" value="1"/>
</dbReference>
<dbReference type="PROSITE" id="PS00789">
    <property type="entry name" value="CHORISMATE_SYNTHASE_3"/>
    <property type="match status" value="1"/>
</dbReference>
<organism>
    <name type="scientific">Streptococcus pneumoniae (strain CGSP14)</name>
    <dbReference type="NCBI Taxonomy" id="516950"/>
    <lineage>
        <taxon>Bacteria</taxon>
        <taxon>Bacillati</taxon>
        <taxon>Bacillota</taxon>
        <taxon>Bacilli</taxon>
        <taxon>Lactobacillales</taxon>
        <taxon>Streptococcaceae</taxon>
        <taxon>Streptococcus</taxon>
    </lineage>
</organism>
<proteinExistence type="inferred from homology"/>
<feature type="chain" id="PRO_1000115406" description="Chorismate synthase">
    <location>
        <begin position="1"/>
        <end position="388"/>
    </location>
</feature>
<feature type="binding site" evidence="1">
    <location>
        <position position="39"/>
    </location>
    <ligand>
        <name>NADP(+)</name>
        <dbReference type="ChEBI" id="CHEBI:58349"/>
    </ligand>
</feature>
<feature type="binding site" evidence="1">
    <location>
        <position position="45"/>
    </location>
    <ligand>
        <name>NADP(+)</name>
        <dbReference type="ChEBI" id="CHEBI:58349"/>
    </ligand>
</feature>
<feature type="binding site" evidence="1">
    <location>
        <begin position="130"/>
        <end position="132"/>
    </location>
    <ligand>
        <name>FMN</name>
        <dbReference type="ChEBI" id="CHEBI:58210"/>
    </ligand>
</feature>
<feature type="binding site" evidence="1">
    <location>
        <begin position="251"/>
        <end position="252"/>
    </location>
    <ligand>
        <name>FMN</name>
        <dbReference type="ChEBI" id="CHEBI:58210"/>
    </ligand>
</feature>
<feature type="binding site" evidence="1">
    <location>
        <position position="296"/>
    </location>
    <ligand>
        <name>FMN</name>
        <dbReference type="ChEBI" id="CHEBI:58210"/>
    </ligand>
</feature>
<feature type="binding site" evidence="1">
    <location>
        <begin position="311"/>
        <end position="315"/>
    </location>
    <ligand>
        <name>FMN</name>
        <dbReference type="ChEBI" id="CHEBI:58210"/>
    </ligand>
</feature>
<feature type="binding site" evidence="1">
    <location>
        <position position="337"/>
    </location>
    <ligand>
        <name>FMN</name>
        <dbReference type="ChEBI" id="CHEBI:58210"/>
    </ligand>
</feature>
<accession>B2IQJ2</accession>
<name>AROC_STRPS</name>
<keyword id="KW-0028">Amino-acid biosynthesis</keyword>
<keyword id="KW-0057">Aromatic amino acid biosynthesis</keyword>
<keyword id="KW-0274">FAD</keyword>
<keyword id="KW-0285">Flavoprotein</keyword>
<keyword id="KW-0288">FMN</keyword>
<keyword id="KW-0456">Lyase</keyword>
<keyword id="KW-0521">NADP</keyword>
<sequence length="388" mass="42845">MRYLTAGESHGPRLTAIIEGIPAGLPLTAEDINEDLRRRQGGYGRGGRMKIESDQVVFTSGVRHGKTTGAPITMDVINKDHQKWLDIMSAEDIEDRLKSKRKITHPRPGHADLVGGIKYRFDDLRNSLERSSARETTMRVAVGAVAKRLLAELDMEIANHVVVFGGKEIDVPENLTVAEIKQRAAQSEVSIVNQEREQEIKDYIDQIKRDGDTIGGVVETVVGGVPVGLGSYVQWDRKLDARLAQAVVSINAFKGVEFGLGFEAGYRKGSQVMDEILWSKEDGYTRRTNNLGGFEGGMTNGQPIVVRGVMKPIPTLYKPLMSVDIETHEPYKATVERSDPTALPAAGMVMEAVVATVLAQEILEKFSSDNLEELKEAVAKHRDYTKNY</sequence>
<comment type="function">
    <text evidence="1">Catalyzes the anti-1,4-elimination of the C-3 phosphate and the C-6 proR hydrogen from 5-enolpyruvylshikimate-3-phosphate (EPSP) to yield chorismate, which is the branch point compound that serves as the starting substrate for the three terminal pathways of aromatic amino acid biosynthesis. This reaction introduces a second double bond into the aromatic ring system.</text>
</comment>
<comment type="catalytic activity">
    <reaction evidence="1">
        <text>5-O-(1-carboxyvinyl)-3-phosphoshikimate = chorismate + phosphate</text>
        <dbReference type="Rhea" id="RHEA:21020"/>
        <dbReference type="ChEBI" id="CHEBI:29748"/>
        <dbReference type="ChEBI" id="CHEBI:43474"/>
        <dbReference type="ChEBI" id="CHEBI:57701"/>
        <dbReference type="EC" id="4.2.3.5"/>
    </reaction>
</comment>
<comment type="cofactor">
    <cofactor evidence="1">
        <name>FMNH2</name>
        <dbReference type="ChEBI" id="CHEBI:57618"/>
    </cofactor>
    <text evidence="1">Reduced FMN (FMNH(2)).</text>
</comment>
<comment type="pathway">
    <text evidence="1">Metabolic intermediate biosynthesis; chorismate biosynthesis; chorismate from D-erythrose 4-phosphate and phosphoenolpyruvate: step 7/7.</text>
</comment>
<comment type="subunit">
    <text evidence="1">Homotetramer.</text>
</comment>
<comment type="similarity">
    <text evidence="1">Belongs to the chorismate synthase family.</text>
</comment>